<accession>A7I008</accession>
<evidence type="ECO:0000255" key="1">
    <source>
        <dbReference type="HAMAP-Rule" id="MF_00270"/>
    </source>
</evidence>
<evidence type="ECO:0000305" key="2"/>
<proteinExistence type="inferred from homology"/>
<sequence>MADKRKYTRKYCKFTEAKIEFIDYKDTALLKYCLSERFKIMPRRLTGTSKKYQEMVEKAIKRARQAALIPYIVDRDNVVVNPFEILG</sequence>
<reference key="1">
    <citation type="submission" date="2007-07" db="EMBL/GenBank/DDBJ databases">
        <title>Complete genome sequence of Campylobacter hominis ATCC BAA-381, a commensal isolated from the human gastrointestinal tract.</title>
        <authorList>
            <person name="Fouts D.E."/>
            <person name="Mongodin E.F."/>
            <person name="Puiu D."/>
            <person name="Sebastian Y."/>
            <person name="Miller W.G."/>
            <person name="Mandrell R.E."/>
            <person name="Nelson K.E."/>
        </authorList>
    </citation>
    <scope>NUCLEOTIDE SEQUENCE [LARGE SCALE GENOMIC DNA]</scope>
    <source>
        <strain>ATCC BAA-381 / DSM 21671 / CCUG 45161 / LMG 19568 / NCTC 13146 / CH001A</strain>
    </source>
</reference>
<organism>
    <name type="scientific">Campylobacter hominis (strain ATCC BAA-381 / DSM 21671 / CCUG 45161 / LMG 19568 / NCTC 13146 / CH001A)</name>
    <dbReference type="NCBI Taxonomy" id="360107"/>
    <lineage>
        <taxon>Bacteria</taxon>
        <taxon>Pseudomonadati</taxon>
        <taxon>Campylobacterota</taxon>
        <taxon>Epsilonproteobacteria</taxon>
        <taxon>Campylobacterales</taxon>
        <taxon>Campylobacteraceae</taxon>
        <taxon>Campylobacter</taxon>
    </lineage>
</organism>
<protein>
    <recommendedName>
        <fullName evidence="1">Small ribosomal subunit protein bS18</fullName>
    </recommendedName>
    <alternativeName>
        <fullName evidence="2">30S ribosomal protein S18</fullName>
    </alternativeName>
</protein>
<keyword id="KW-1185">Reference proteome</keyword>
<keyword id="KW-0687">Ribonucleoprotein</keyword>
<keyword id="KW-0689">Ribosomal protein</keyword>
<keyword id="KW-0694">RNA-binding</keyword>
<keyword id="KW-0699">rRNA-binding</keyword>
<dbReference type="EMBL" id="CP000776">
    <property type="protein sequence ID" value="ABS51322.1"/>
    <property type="molecule type" value="Genomic_DNA"/>
</dbReference>
<dbReference type="RefSeq" id="WP_012108130.1">
    <property type="nucleotide sequence ID" value="NC_009714.1"/>
</dbReference>
<dbReference type="SMR" id="A7I008"/>
<dbReference type="STRING" id="360107.CHAB381_0243"/>
<dbReference type="KEGG" id="cha:CHAB381_0243"/>
<dbReference type="eggNOG" id="COG0238">
    <property type="taxonomic scope" value="Bacteria"/>
</dbReference>
<dbReference type="HOGENOM" id="CLU_148710_2_2_7"/>
<dbReference type="OrthoDB" id="9812008at2"/>
<dbReference type="Proteomes" id="UP000002407">
    <property type="component" value="Chromosome"/>
</dbReference>
<dbReference type="GO" id="GO:0022627">
    <property type="term" value="C:cytosolic small ribosomal subunit"/>
    <property type="evidence" value="ECO:0007669"/>
    <property type="project" value="TreeGrafter"/>
</dbReference>
<dbReference type="GO" id="GO:0070181">
    <property type="term" value="F:small ribosomal subunit rRNA binding"/>
    <property type="evidence" value="ECO:0007669"/>
    <property type="project" value="TreeGrafter"/>
</dbReference>
<dbReference type="GO" id="GO:0003735">
    <property type="term" value="F:structural constituent of ribosome"/>
    <property type="evidence" value="ECO:0007669"/>
    <property type="project" value="InterPro"/>
</dbReference>
<dbReference type="GO" id="GO:0006412">
    <property type="term" value="P:translation"/>
    <property type="evidence" value="ECO:0007669"/>
    <property type="project" value="UniProtKB-UniRule"/>
</dbReference>
<dbReference type="Gene3D" id="4.10.640.10">
    <property type="entry name" value="Ribosomal protein S18"/>
    <property type="match status" value="1"/>
</dbReference>
<dbReference type="HAMAP" id="MF_00270">
    <property type="entry name" value="Ribosomal_bS18"/>
    <property type="match status" value="1"/>
</dbReference>
<dbReference type="InterPro" id="IPR001648">
    <property type="entry name" value="Ribosomal_bS18"/>
</dbReference>
<dbReference type="InterPro" id="IPR036870">
    <property type="entry name" value="Ribosomal_bS18_sf"/>
</dbReference>
<dbReference type="NCBIfam" id="TIGR00165">
    <property type="entry name" value="S18"/>
    <property type="match status" value="1"/>
</dbReference>
<dbReference type="PANTHER" id="PTHR13479">
    <property type="entry name" value="30S RIBOSOMAL PROTEIN S18"/>
    <property type="match status" value="1"/>
</dbReference>
<dbReference type="PANTHER" id="PTHR13479:SF40">
    <property type="entry name" value="SMALL RIBOSOMAL SUBUNIT PROTEIN BS18M"/>
    <property type="match status" value="1"/>
</dbReference>
<dbReference type="Pfam" id="PF01084">
    <property type="entry name" value="Ribosomal_S18"/>
    <property type="match status" value="1"/>
</dbReference>
<dbReference type="PRINTS" id="PR00974">
    <property type="entry name" value="RIBOSOMALS18"/>
</dbReference>
<dbReference type="SUPFAM" id="SSF46911">
    <property type="entry name" value="Ribosomal protein S18"/>
    <property type="match status" value="1"/>
</dbReference>
<gene>
    <name evidence="1" type="primary">rpsR</name>
    <name type="ordered locus">CHAB381_0243</name>
</gene>
<feature type="chain" id="PRO_1000003473" description="Small ribosomal subunit protein bS18">
    <location>
        <begin position="1"/>
        <end position="87"/>
    </location>
</feature>
<name>RS18_CAMHC</name>
<comment type="function">
    <text evidence="1">Binds as a heterodimer with protein bS6 to the central domain of the 16S rRNA, where it helps stabilize the platform of the 30S subunit.</text>
</comment>
<comment type="subunit">
    <text evidence="1">Part of the 30S ribosomal subunit. Forms a tight heterodimer with protein bS6.</text>
</comment>
<comment type="similarity">
    <text evidence="1">Belongs to the bacterial ribosomal protein bS18 family.</text>
</comment>